<dbReference type="EMBL" id="BX284601">
    <property type="protein sequence ID" value="CAA99763.1"/>
    <property type="molecule type" value="Genomic_DNA"/>
</dbReference>
<dbReference type="PIR" id="T18883">
    <property type="entry name" value="T18883"/>
</dbReference>
<dbReference type="RefSeq" id="NP_492568.1">
    <property type="nucleotide sequence ID" value="NM_060167.7"/>
</dbReference>
<dbReference type="SMR" id="Q17602"/>
<dbReference type="FunCoup" id="Q17602">
    <property type="interactions" value="259"/>
</dbReference>
<dbReference type="STRING" id="6239.C03D6.4.1"/>
<dbReference type="PaxDb" id="6239-C03D6.4"/>
<dbReference type="PeptideAtlas" id="Q17602"/>
<dbReference type="EnsemblMetazoa" id="C03D6.4.1">
    <property type="protein sequence ID" value="C03D6.4.1"/>
    <property type="gene ID" value="WBGene00003800"/>
</dbReference>
<dbReference type="GeneID" id="172813"/>
<dbReference type="KEGG" id="cel:CELE_C03D6.4"/>
<dbReference type="UCSC" id="C03D6.4">
    <property type="organism name" value="c. elegans"/>
</dbReference>
<dbReference type="AGR" id="WB:WBGene00003800"/>
<dbReference type="CTD" id="172813"/>
<dbReference type="WormBase" id="C03D6.4">
    <property type="protein sequence ID" value="CE05198"/>
    <property type="gene ID" value="WBGene00003800"/>
    <property type="gene designation" value="npp-14"/>
</dbReference>
<dbReference type="eggNOG" id="KOG3630">
    <property type="taxonomic scope" value="Eukaryota"/>
</dbReference>
<dbReference type="GeneTree" id="ENSGT00940000165854"/>
<dbReference type="HOGENOM" id="CLU_253002_0_0_1"/>
<dbReference type="InParanoid" id="Q17602"/>
<dbReference type="OMA" id="ICKGMVS"/>
<dbReference type="OrthoDB" id="248320at2759"/>
<dbReference type="PRO" id="PR:Q17602"/>
<dbReference type="Proteomes" id="UP000001940">
    <property type="component" value="Chromosome I"/>
</dbReference>
<dbReference type="Bgee" id="WBGene00003800">
    <property type="expression patterns" value="Expressed in adult organism and 4 other cell types or tissues"/>
</dbReference>
<dbReference type="GO" id="GO:0031965">
    <property type="term" value="C:nuclear membrane"/>
    <property type="evidence" value="ECO:0007669"/>
    <property type="project" value="UniProtKB-SubCell"/>
</dbReference>
<dbReference type="GO" id="GO:0005643">
    <property type="term" value="C:nuclear pore"/>
    <property type="evidence" value="ECO:0000318"/>
    <property type="project" value="GO_Central"/>
</dbReference>
<dbReference type="GO" id="GO:0089720">
    <property type="term" value="F:caspase binding"/>
    <property type="evidence" value="ECO:0000353"/>
    <property type="project" value="UniProtKB"/>
</dbReference>
<dbReference type="GO" id="GO:0008139">
    <property type="term" value="F:nuclear localization sequence binding"/>
    <property type="evidence" value="ECO:0000318"/>
    <property type="project" value="GO_Central"/>
</dbReference>
<dbReference type="GO" id="GO:0017056">
    <property type="term" value="F:structural constituent of nuclear pore"/>
    <property type="evidence" value="ECO:0000318"/>
    <property type="project" value="GO_Central"/>
</dbReference>
<dbReference type="GO" id="GO:0051028">
    <property type="term" value="P:mRNA transport"/>
    <property type="evidence" value="ECO:0007669"/>
    <property type="project" value="UniProtKB-KW"/>
</dbReference>
<dbReference type="GO" id="GO:1900118">
    <property type="term" value="P:negative regulation of execution phase of apoptosis"/>
    <property type="evidence" value="ECO:0000315"/>
    <property type="project" value="UniProtKB"/>
</dbReference>
<dbReference type="GO" id="GO:0006606">
    <property type="term" value="P:protein import into nucleus"/>
    <property type="evidence" value="ECO:0000318"/>
    <property type="project" value="GO_Central"/>
</dbReference>
<dbReference type="GO" id="GO:0006405">
    <property type="term" value="P:RNA export from nucleus"/>
    <property type="evidence" value="ECO:0000318"/>
    <property type="project" value="GO_Central"/>
</dbReference>
<dbReference type="Gene3D" id="2.130.10.10">
    <property type="entry name" value="YVTN repeat-like/Quinoprotein amine dehydrogenase"/>
    <property type="match status" value="1"/>
</dbReference>
<dbReference type="InterPro" id="IPR026054">
    <property type="entry name" value="Nucleoporin"/>
</dbReference>
<dbReference type="InterPro" id="IPR039462">
    <property type="entry name" value="Nup159/Nup146_N"/>
</dbReference>
<dbReference type="InterPro" id="IPR015943">
    <property type="entry name" value="WD40/YVTN_repeat-like_dom_sf"/>
</dbReference>
<dbReference type="PANTHER" id="PTHR23193">
    <property type="entry name" value="NUCLEAR PORE COMPLEX PROTEIN NUP"/>
    <property type="match status" value="1"/>
</dbReference>
<dbReference type="PANTHER" id="PTHR23193:SF46">
    <property type="entry name" value="NUCLEAR PORE COMPLEX PROTEIN NUP214"/>
    <property type="match status" value="1"/>
</dbReference>
<dbReference type="Pfam" id="PF16755">
    <property type="entry name" value="Beta-prop_NUP159_NUP214"/>
    <property type="match status" value="1"/>
</dbReference>
<dbReference type="SUPFAM" id="SSF117289">
    <property type="entry name" value="Nucleoporin domain"/>
    <property type="match status" value="1"/>
</dbReference>
<keyword id="KW-0472">Membrane</keyword>
<keyword id="KW-0509">mRNA transport</keyword>
<keyword id="KW-0906">Nuclear pore complex</keyword>
<keyword id="KW-0539">Nucleus</keyword>
<keyword id="KW-0653">Protein transport</keyword>
<keyword id="KW-1185">Reference proteome</keyword>
<keyword id="KW-0677">Repeat</keyword>
<keyword id="KW-0811">Translocation</keyword>
<keyword id="KW-0813">Transport</keyword>
<reference evidence="7" key="1">
    <citation type="journal article" date="1998" name="Science">
        <title>Genome sequence of the nematode C. elegans: a platform for investigating biology.</title>
        <authorList>
            <consortium name="The C. elegans sequencing consortium"/>
        </authorList>
    </citation>
    <scope>NUCLEOTIDE SEQUENCE [LARGE SCALE GENOMIC DNA]</scope>
    <source>
        <strain evidence="7">Bristol N2</strain>
    </source>
</reference>
<reference evidence="5" key="2">
    <citation type="journal article" date="2003" name="Mol. Biol. Cell">
        <title>Caenorhabditis elegans nucleoporins Nup93 and Nup205 determine the limit of nuclear pore complex size exclusion in vivo.</title>
        <authorList>
            <person name="Galy V."/>
            <person name="Mattaj I.W."/>
            <person name="Askjaer P."/>
        </authorList>
    </citation>
    <scope>DISRUPTION PHENOTYPE</scope>
</reference>
<reference evidence="5" key="3">
    <citation type="journal article" date="2016" name="Nat. Struct. Mol. Biol.">
        <title>Regulation of CED-3 caspase localization and activation by C. elegans nuclear-membrane protein NPP-14.</title>
        <authorList>
            <person name="Chen X."/>
            <person name="Wang Y."/>
            <person name="Chen Y.Z."/>
            <person name="Harry B.L."/>
            <person name="Nakagawa A."/>
            <person name="Lee E.S."/>
            <person name="Guo H."/>
            <person name="Xue D."/>
        </authorList>
    </citation>
    <scope>FUNCTION</scope>
    <scope>INTERACTION WITH CED-3</scope>
    <scope>SUBCELLULAR LOCATION</scope>
    <scope>DISRUPTION PHENOTYPE</scope>
</reference>
<organism evidence="7">
    <name type="scientific">Caenorhabditis elegans</name>
    <dbReference type="NCBI Taxonomy" id="6239"/>
    <lineage>
        <taxon>Eukaryota</taxon>
        <taxon>Metazoa</taxon>
        <taxon>Ecdysozoa</taxon>
        <taxon>Nematoda</taxon>
        <taxon>Chromadorea</taxon>
        <taxon>Rhabditida</taxon>
        <taxon>Rhabditina</taxon>
        <taxon>Rhabditomorpha</taxon>
        <taxon>Rhabditoidea</taxon>
        <taxon>Rhabditidae</taxon>
        <taxon>Peloderinae</taxon>
        <taxon>Caenorhabditis</taxon>
    </lineage>
</organism>
<accession>Q17602</accession>
<evidence type="ECO:0000250" key="1">
    <source>
        <dbReference type="UniProtKB" id="P35658"/>
    </source>
</evidence>
<evidence type="ECO:0000256" key="2">
    <source>
        <dbReference type="SAM" id="MobiDB-lite"/>
    </source>
</evidence>
<evidence type="ECO:0000269" key="3">
    <source>
    </source>
</evidence>
<evidence type="ECO:0000269" key="4">
    <source>
    </source>
</evidence>
<evidence type="ECO:0000305" key="5"/>
<evidence type="ECO:0000305" key="6">
    <source>
    </source>
</evidence>
<evidence type="ECO:0000312" key="7">
    <source>
        <dbReference type="Proteomes" id="UP000001940"/>
    </source>
</evidence>
<evidence type="ECO:0000312" key="8">
    <source>
        <dbReference type="WormBase" id="C03D6.4"/>
    </source>
</evidence>
<gene>
    <name evidence="8" type="primary">npp-14</name>
    <name evidence="8" type="ORF">C03D6.4</name>
</gene>
<sequence>MSNEDVAEDVSQVTDFHFHTCRKFRLFSSKSDGYSQNEINIRNRVATSSQLGVTFVTVNSNQLSCFHTKSLLGYKITRENMNVEVTDLPIKTIRLHGVVLINDMGVNSDGTVLGVLHTKNNDVSVDVFDIKKICTSSSIEPFKPLCTTRVGTEQINQGSCLEWNPAFPDTFAASSTDRSILVAKINVQSPANQKLVGIGKFGAVTTAISWSPKGKQLTIGDSLGKIVQLKPELEVVRSQHGPENKPNYGRITGLCWLATTEWLVSLENGTDQDAYLMRCKKDKPTEWIQFHELSYSSSKWPLPPQLFPATQLLVDWNVVIVGNSKTSEISTVGKRDDWQTWVPVEGESIYLPTTSSGKDTVPIGVAVDRSMTDEVLLNPDGSQRHRPSPLVLCLTNDGILTAHHIISTFAAHIPCQMSSQNLAINDLKKLQFDSQKPISAPPSDQTPVTKPSTVFGQKPEAETLKSSLVGSPSSVQTPKPSSSLFNPKSIASNIETSQLTESKPSTPAAPSSQPKIASTPKSEAIPKISDKTLEHKKAELIATKKQVLIERMDKINDSMAGAKDATMKLSFAVGKVKTTIMECADVVRASLGDSKEVMDELKNLILSIERMSDRTQHTVKEMDFEIDEKMELVAGVEDGNQVLEKLRNMSETEKLMRFNKLETAADLLNGKYEECSDLIKKLRMSLSEKESLRKQAILSPLRLSSNLNQLRSGSETELALKVMRNVSKIIMDTREQIQRTELEFVRFQRDVKFQNFKKGKENLNFTQPLEMSSLDGDAPQGKSLTDAESIKVRQALVNQIQKRGIVKTRNVIVESYKKSENSAAMKNDLLDTSNLSNAILKLSMTPRRVMPSSSLFSASPSTPSTKSDAATQADEPPIVKTVVVTVESPAKPIASAPAVSSPLIKLNTTTATTTMTTPKVTVPKEEANKTQDQKPIISTPASSSIFSSGSLFGTKTQTPLVSKEESTLTTGVPSLINSSLSISPQEIEKASSKVETLNKTEEVKDEKSENEVTPDLKSEEPKSLETKVKEEPKPAVQTPVKEEETGSNIQKTPSFSFNSTTTPKSTSSTSSIFGGGLKTQTPSSSNSTNIFGARTTTTATPTPASNTSSIFGGGSKAASSPFGSFGQAGCQPAKTSNPATSTASVTFSFNTGATSASAKPAGFGSFGAGASAKPSSVFGGSVTAPTVPNVDDGMEDDSMANGGGSGGFMSGLGNARTSNTSGGNNPFAPKTSTGTSASSSSWLFGGGGNQQQQQQQKPSFSFNTAGSSAQQASAPATGTSSVFGGAPKFGSQPAFGAKPFGGGANAGLSKNASIFGGATSSTTNNPATGGFAQFASGQKTSSLFGGGATPQTNTSIFGGGANTTPAPTSSVFGGGASANANKPTSFTSWR</sequence>
<proteinExistence type="evidence at protein level"/>
<protein>
    <recommendedName>
        <fullName evidence="8">Nuclear pore complex protein 14</fullName>
    </recommendedName>
    <alternativeName>
        <fullName evidence="5">Nuclear pore complex protein Nup214</fullName>
    </alternativeName>
    <alternativeName>
        <fullName evidence="5">Nucleoporin npp-14</fullName>
    </alternativeName>
</protein>
<name>NU214_CAEEL</name>
<feature type="chain" id="PRO_0000440164" description="Nuclear pore complex protein 14" evidence="5">
    <location>
        <begin position="1"/>
        <end position="1390"/>
    </location>
</feature>
<feature type="repeat" description="1" evidence="5">
    <location>
        <begin position="1073"/>
        <end position="1074"/>
    </location>
</feature>
<feature type="repeat" description="2" evidence="5">
    <location>
        <begin position="1091"/>
        <end position="1092"/>
    </location>
</feature>
<feature type="repeat" description="3" evidence="5">
    <location>
        <begin position="1111"/>
        <end position="1112"/>
    </location>
</feature>
<feature type="repeat" description="4" evidence="5">
    <location>
        <begin position="1122"/>
        <end position="1123"/>
    </location>
</feature>
<feature type="repeat" description="5" evidence="5">
    <location>
        <begin position="1125"/>
        <end position="1126"/>
    </location>
</feature>
<feature type="repeat" description="6" evidence="5">
    <location>
        <begin position="1163"/>
        <end position="1164"/>
    </location>
</feature>
<feature type="repeat" description="7" evidence="5">
    <location>
        <begin position="1166"/>
        <end position="1167"/>
    </location>
</feature>
<feature type="repeat" description="8" evidence="5">
    <location>
        <begin position="1178"/>
        <end position="1179"/>
    </location>
</feature>
<feature type="repeat" description="9" evidence="5">
    <location>
        <begin position="1244"/>
        <end position="1245"/>
    </location>
</feature>
<feature type="repeat" description="10" evidence="5">
    <location>
        <begin position="1283"/>
        <end position="1284"/>
    </location>
</feature>
<feature type="repeat" description="11" evidence="5">
    <location>
        <begin position="1289"/>
        <end position="1290"/>
    </location>
</feature>
<feature type="repeat" description="12" evidence="5">
    <location>
        <begin position="1295"/>
        <end position="1296"/>
    </location>
</feature>
<feature type="repeat" description="13" evidence="5">
    <location>
        <begin position="1300"/>
        <end position="1301"/>
    </location>
</feature>
<feature type="repeat" description="14" evidence="5">
    <location>
        <begin position="1315"/>
        <end position="1316"/>
    </location>
</feature>
<feature type="repeat" description="15" evidence="5">
    <location>
        <begin position="1344"/>
        <end position="1345"/>
    </location>
</feature>
<feature type="repeat" description="16" evidence="5">
    <location>
        <begin position="1357"/>
        <end position="1358"/>
    </location>
</feature>
<feature type="repeat" description="17" evidence="5">
    <location>
        <begin position="1372"/>
        <end position="1373"/>
    </location>
</feature>
<feature type="region of interest" description="Disordered" evidence="2">
    <location>
        <begin position="434"/>
        <end position="530"/>
    </location>
</feature>
<feature type="region of interest" description="Disordered" evidence="2">
    <location>
        <begin position="851"/>
        <end position="874"/>
    </location>
</feature>
<feature type="region of interest" description="Disordered" evidence="2">
    <location>
        <begin position="985"/>
        <end position="1118"/>
    </location>
</feature>
<feature type="region of interest" description="17 X 2 AA repeats of F-G" evidence="5">
    <location>
        <begin position="1073"/>
        <end position="1373"/>
    </location>
</feature>
<feature type="region of interest" description="Disordered" evidence="2">
    <location>
        <begin position="1183"/>
        <end position="1280"/>
    </location>
</feature>
<feature type="region of interest" description="Disordered" evidence="2">
    <location>
        <begin position="1342"/>
        <end position="1390"/>
    </location>
</feature>
<feature type="compositionally biased region" description="Polar residues" evidence="2">
    <location>
        <begin position="434"/>
        <end position="455"/>
    </location>
</feature>
<feature type="compositionally biased region" description="Polar residues" evidence="2">
    <location>
        <begin position="464"/>
        <end position="521"/>
    </location>
</feature>
<feature type="compositionally biased region" description="Low complexity" evidence="2">
    <location>
        <begin position="851"/>
        <end position="864"/>
    </location>
</feature>
<feature type="compositionally biased region" description="Basic and acidic residues" evidence="2">
    <location>
        <begin position="986"/>
        <end position="1033"/>
    </location>
</feature>
<feature type="compositionally biased region" description="Low complexity" evidence="2">
    <location>
        <begin position="1051"/>
        <end position="1071"/>
    </location>
</feature>
<feature type="compositionally biased region" description="Polar residues" evidence="2">
    <location>
        <begin position="1078"/>
        <end position="1090"/>
    </location>
</feature>
<feature type="compositionally biased region" description="Low complexity" evidence="2">
    <location>
        <begin position="1095"/>
        <end position="1109"/>
    </location>
</feature>
<feature type="compositionally biased region" description="Gly residues" evidence="2">
    <location>
        <begin position="1201"/>
        <end position="1210"/>
    </location>
</feature>
<feature type="compositionally biased region" description="Low complexity" evidence="2">
    <location>
        <begin position="1231"/>
        <end position="1243"/>
    </location>
</feature>
<feature type="compositionally biased region" description="Low complexity" evidence="2">
    <location>
        <begin position="1264"/>
        <end position="1280"/>
    </location>
</feature>
<feature type="compositionally biased region" description="Polar residues" evidence="2">
    <location>
        <begin position="1342"/>
        <end position="1371"/>
    </location>
</feature>
<feature type="compositionally biased region" description="Polar residues" evidence="2">
    <location>
        <begin position="1378"/>
        <end position="1390"/>
    </location>
</feature>
<comment type="function">
    <text evidence="1 4">May serve as a docking site in the receptor-mediated import of substrates across the nuclear pore complex (By similarity). Plays a role in apoptosis by tethering caspase ced-3 to the nuclear membrane preventing its autoprocessing in absence of ced-4.</text>
</comment>
<comment type="subunit">
    <text evidence="4">Interacts with caspase ced-3 (via propeptide); the interaction tethers ced-3 to the nuclear membrane and prevents its autoprocessing in absence of ced-4.</text>
</comment>
<comment type="subcellular location">
    <subcellularLocation>
        <location evidence="1">Nucleus</location>
        <location evidence="1">Nuclear pore complex</location>
    </subcellularLocation>
    <subcellularLocation>
        <location evidence="4">Nucleus membrane</location>
        <topology evidence="6">Peripheral membrane protein</topology>
    </subcellularLocation>
    <text evidence="1 4">Cytoplasmic side of the nuclear pore complex (By similarity). Co-localizes with caspase ced-3 to the perinuclear region in germ cells.</text>
</comment>
<comment type="disruption phenotype">
    <text evidence="3 4">RNAi-mediated knockdown causes no visible phenotype (PubMed:12937276). Simultaneous knockdown of npp-2 results in embryonic lethality (PubMed:12937276). RNAi-mediated knockdown in a ced-1 (e1735) and ced-3 (n718) double mutant background partially restores embryonic cell apoptosis (PubMed:27723735).</text>
</comment>